<proteinExistence type="evidence at transcript level"/>
<reference key="1">
    <citation type="journal article" date="2000" name="DNA Res.">
        <title>Structural analysis of Arabidopsis thaliana chromosome 3. II. Sequence features of the 4,251,695 bp regions covered by 90 P1, TAC and BAC clones.</title>
        <authorList>
            <person name="Kaneko T."/>
            <person name="Katoh T."/>
            <person name="Sato S."/>
            <person name="Nakamura Y."/>
            <person name="Asamizu E."/>
            <person name="Tabata S."/>
        </authorList>
    </citation>
    <scope>NUCLEOTIDE SEQUENCE [LARGE SCALE GENOMIC DNA]</scope>
    <source>
        <strain>cv. Columbia</strain>
    </source>
</reference>
<reference key="2">
    <citation type="journal article" date="2017" name="Plant J.">
        <title>Araport11: a complete reannotation of the Arabidopsis thaliana reference genome.</title>
        <authorList>
            <person name="Cheng C.Y."/>
            <person name="Krishnakumar V."/>
            <person name="Chan A.P."/>
            <person name="Thibaud-Nissen F."/>
            <person name="Schobel S."/>
            <person name="Town C.D."/>
        </authorList>
    </citation>
    <scope>GENOME REANNOTATION</scope>
    <source>
        <strain>cv. Columbia</strain>
    </source>
</reference>
<reference key="3">
    <citation type="submission" date="2006-07" db="EMBL/GenBank/DDBJ databases">
        <title>Large-scale analysis of RIKEN Arabidopsis full-length (RAFL) cDNAs.</title>
        <authorList>
            <person name="Totoki Y."/>
            <person name="Seki M."/>
            <person name="Ishida J."/>
            <person name="Nakajima M."/>
            <person name="Enju A."/>
            <person name="Morosawa T."/>
            <person name="Kamiya A."/>
            <person name="Narusaka M."/>
            <person name="Shin-i T."/>
            <person name="Nakagawa M."/>
            <person name="Sakamoto N."/>
            <person name="Oishi K."/>
            <person name="Kohara Y."/>
            <person name="Kobayashi M."/>
            <person name="Toyoda A."/>
            <person name="Sakaki Y."/>
            <person name="Sakurai T."/>
            <person name="Iida K."/>
            <person name="Akiyama K."/>
            <person name="Satou M."/>
            <person name="Toyoda T."/>
            <person name="Konagaya A."/>
            <person name="Carninci P."/>
            <person name="Kawai J."/>
            <person name="Hayashizaki Y."/>
            <person name="Shinozaki K."/>
        </authorList>
    </citation>
    <scope>NUCLEOTIDE SEQUENCE [LARGE SCALE MRNA]</scope>
</reference>
<reference key="4">
    <citation type="journal article" date="2003" name="Science">
        <title>Empirical analysis of transcriptional activity in the Arabidopsis genome.</title>
        <authorList>
            <person name="Yamada K."/>
            <person name="Lim J."/>
            <person name="Dale J.M."/>
            <person name="Chen H."/>
            <person name="Shinn P."/>
            <person name="Palm C.J."/>
            <person name="Southwick A.M."/>
            <person name="Wu H.C."/>
            <person name="Kim C.J."/>
            <person name="Nguyen M."/>
            <person name="Pham P.K."/>
            <person name="Cheuk R.F."/>
            <person name="Karlin-Newmann G."/>
            <person name="Liu S.X."/>
            <person name="Lam B."/>
            <person name="Sakano H."/>
            <person name="Wu T."/>
            <person name="Yu G."/>
            <person name="Miranda M."/>
            <person name="Quach H.L."/>
            <person name="Tripp M."/>
            <person name="Chang C.H."/>
            <person name="Lee J.M."/>
            <person name="Toriumi M.J."/>
            <person name="Chan M.M."/>
            <person name="Tang C.C."/>
            <person name="Onodera C.S."/>
            <person name="Deng J.M."/>
            <person name="Akiyama K."/>
            <person name="Ansari Y."/>
            <person name="Arakawa T."/>
            <person name="Banh J."/>
            <person name="Banno F."/>
            <person name="Bowser L."/>
            <person name="Brooks S.Y."/>
            <person name="Carninci P."/>
            <person name="Chao Q."/>
            <person name="Choy N."/>
            <person name="Enju A."/>
            <person name="Goldsmith A.D."/>
            <person name="Gurjal M."/>
            <person name="Hansen N.F."/>
            <person name="Hayashizaki Y."/>
            <person name="Johnson-Hopson C."/>
            <person name="Hsuan V.W."/>
            <person name="Iida K."/>
            <person name="Karnes M."/>
            <person name="Khan S."/>
            <person name="Koesema E."/>
            <person name="Ishida J."/>
            <person name="Jiang P.X."/>
            <person name="Jones T."/>
            <person name="Kawai J."/>
            <person name="Kamiya A."/>
            <person name="Meyers C."/>
            <person name="Nakajima M."/>
            <person name="Narusaka M."/>
            <person name="Seki M."/>
            <person name="Sakurai T."/>
            <person name="Satou M."/>
            <person name="Tamse R."/>
            <person name="Vaysberg M."/>
            <person name="Wallender E.K."/>
            <person name="Wong C."/>
            <person name="Yamamura Y."/>
            <person name="Yuan S."/>
            <person name="Shinozaki K."/>
            <person name="Davis R.W."/>
            <person name="Theologis A."/>
            <person name="Ecker J.R."/>
        </authorList>
    </citation>
    <scope>NUCLEOTIDE SEQUENCE [LARGE SCALE MRNA] OF 6-460</scope>
    <source>
        <strain>cv. Columbia</strain>
    </source>
</reference>
<reference key="5">
    <citation type="journal article" date="2008" name="Plant Cell Physiol.">
        <title>Antagonistic jacalin-related lectins regulate the size of ER body-type beta-glucosidase complexes in Arabidopsis thaliana.</title>
        <authorList>
            <person name="Nagano A.J."/>
            <person name="Fukao Y."/>
            <person name="Fujiwara M."/>
            <person name="Nishimura M."/>
            <person name="Hara-Nishimura I."/>
        </authorList>
    </citation>
    <scope>GENE FAMILY</scope>
    <scope>NOMENCLATURE</scope>
</reference>
<evidence type="ECO:0000250" key="1">
    <source>
        <dbReference type="UniProtKB" id="Q9FGC5"/>
    </source>
</evidence>
<evidence type="ECO:0000255" key="2">
    <source>
        <dbReference type="PROSITE-ProRule" id="PRU01088"/>
    </source>
</evidence>
<evidence type="ECO:0000256" key="3">
    <source>
        <dbReference type="SAM" id="MobiDB-lite"/>
    </source>
</evidence>
<evidence type="ECO:0000305" key="4"/>
<sequence>MAAATMSWDDGKHMKVKRVQITYEDVINSIEAEYDGDTHNPHHHGTPGKKSDGVSLSPDEYITDVTGYYKTTGAEDAIAALAFKTNKTEYGPYGNKTRNQFSIHAPKDNQIAGFQGISSNVLNSIDVHFAPLPSSSSSSSSLSQANKVDAQGGKGGTSWDDGAHDHVRRVYIGQGDSGVTYVKFEYEKDDKKESREHGKKTLLGAEVFEVDPDDYITSVEVQSDRIFGQDTEVITSLIFKTSKGKFSPPFGLEGSQKYELKDKNGGKLVGFHGRVGGELLNALGAYFAPSSGRGTPSATQPPGSAQPTGSAGAKKLEAKGGNVGNPWDDGPHEGVRKVYIGQGDSGVSYVKFVYDKDSKEVPGNDHGKRTLLAPEEFLLEYPNEYITSVELNYDKIFGTEGEIITMLRFTTNKRTSPPFGLEGAKSVLLKEDGHKIVGFHGKAGADIIHQVGVHVKPISK</sequence>
<name>JAL36_ARATH</name>
<keyword id="KW-0007">Acetylation</keyword>
<keyword id="KW-0430">Lectin</keyword>
<keyword id="KW-1185">Reference proteome</keyword>
<keyword id="KW-0677">Repeat</keyword>
<feature type="initiator methionine" description="Removed" evidence="1">
    <location>
        <position position="1"/>
    </location>
</feature>
<feature type="chain" id="PRO_0000430394" description="Jacalin-related lectin 36">
    <location>
        <begin position="2"/>
        <end position="460"/>
    </location>
</feature>
<feature type="domain" description="Jacalin-type lectin 1" evidence="2">
    <location>
        <begin position="1"/>
        <end position="131"/>
    </location>
</feature>
<feature type="domain" description="Jacalin-type lectin 2" evidence="2">
    <location>
        <begin position="145"/>
        <end position="289"/>
    </location>
</feature>
<feature type="domain" description="Jacalin-type lectin 3" evidence="2">
    <location>
        <begin position="313"/>
        <end position="457"/>
    </location>
</feature>
<feature type="region of interest" description="Disordered" evidence="3">
    <location>
        <begin position="34"/>
        <end position="57"/>
    </location>
</feature>
<feature type="region of interest" description="Disordered" evidence="3">
    <location>
        <begin position="133"/>
        <end position="162"/>
    </location>
</feature>
<feature type="region of interest" description="Disordered" evidence="3">
    <location>
        <begin position="291"/>
        <end position="334"/>
    </location>
</feature>
<feature type="compositionally biased region" description="Low complexity" evidence="3">
    <location>
        <begin position="133"/>
        <end position="143"/>
    </location>
</feature>
<feature type="compositionally biased region" description="Polar residues" evidence="3">
    <location>
        <begin position="292"/>
        <end position="309"/>
    </location>
</feature>
<feature type="modified residue" description="N-acetylalanine" evidence="1">
    <location>
        <position position="2"/>
    </location>
</feature>
<gene>
    <name type="primary">JAL36</name>
    <name type="ordered locus">At3g21380</name>
    <name type="ORF">MHC9.6</name>
</gene>
<comment type="similarity">
    <text evidence="2 4">Belongs to the jacalin lectin family.</text>
</comment>
<organism>
    <name type="scientific">Arabidopsis thaliana</name>
    <name type="common">Mouse-ear cress</name>
    <dbReference type="NCBI Taxonomy" id="3702"/>
    <lineage>
        <taxon>Eukaryota</taxon>
        <taxon>Viridiplantae</taxon>
        <taxon>Streptophyta</taxon>
        <taxon>Embryophyta</taxon>
        <taxon>Tracheophyta</taxon>
        <taxon>Spermatophyta</taxon>
        <taxon>Magnoliopsida</taxon>
        <taxon>eudicotyledons</taxon>
        <taxon>Gunneridae</taxon>
        <taxon>Pentapetalae</taxon>
        <taxon>rosids</taxon>
        <taxon>malvids</taxon>
        <taxon>Brassicales</taxon>
        <taxon>Brassicaceae</taxon>
        <taxon>Camelineae</taxon>
        <taxon>Arabidopsis</taxon>
    </lineage>
</organism>
<protein>
    <recommendedName>
        <fullName>Jacalin-related lectin 36</fullName>
    </recommendedName>
</protein>
<dbReference type="EMBL" id="AP001305">
    <property type="protein sequence ID" value="BAB03051.1"/>
    <property type="molecule type" value="Genomic_DNA"/>
</dbReference>
<dbReference type="EMBL" id="CP002686">
    <property type="protein sequence ID" value="AEE76503.1"/>
    <property type="molecule type" value="Genomic_DNA"/>
</dbReference>
<dbReference type="EMBL" id="AK221897">
    <property type="protein sequence ID" value="BAD94257.1"/>
    <property type="molecule type" value="mRNA"/>
</dbReference>
<dbReference type="EMBL" id="AK229853">
    <property type="protein sequence ID" value="BAF01682.1"/>
    <property type="molecule type" value="mRNA"/>
</dbReference>
<dbReference type="EMBL" id="BT010454">
    <property type="protein sequence ID" value="AAQ62874.1"/>
    <property type="molecule type" value="mRNA"/>
</dbReference>
<dbReference type="RefSeq" id="NP_001319607.1">
    <property type="nucleotide sequence ID" value="NM_001338529.1"/>
</dbReference>
<dbReference type="SMR" id="Q9LIF8"/>
<dbReference type="FunCoup" id="Q9LIF8">
    <property type="interactions" value="7"/>
</dbReference>
<dbReference type="STRING" id="3702.Q9LIF8"/>
<dbReference type="iPTMnet" id="Q9LIF8"/>
<dbReference type="PaxDb" id="3702-AT3G21380.1"/>
<dbReference type="ProMEX" id="Q9LIF8"/>
<dbReference type="ProteomicsDB" id="232291"/>
<dbReference type="EnsemblPlants" id="AT3G21380.1">
    <property type="protein sequence ID" value="AT3G21380.1"/>
    <property type="gene ID" value="AT3G21380"/>
</dbReference>
<dbReference type="GeneID" id="821692"/>
<dbReference type="Gramene" id="AT3G21380.1">
    <property type="protein sequence ID" value="AT3G21380.1"/>
    <property type="gene ID" value="AT3G21380"/>
</dbReference>
<dbReference type="KEGG" id="ath:AT3G21380"/>
<dbReference type="Araport" id="AT3G21380"/>
<dbReference type="TAIR" id="AT3G21380"/>
<dbReference type="HOGENOM" id="CLU_041730_0_0_1"/>
<dbReference type="InParanoid" id="Q9LIF8"/>
<dbReference type="OMA" id="FSIHAPK"/>
<dbReference type="PhylomeDB" id="Q9LIF8"/>
<dbReference type="PRO" id="PR:Q9LIF8"/>
<dbReference type="Proteomes" id="UP000006548">
    <property type="component" value="Chromosome 3"/>
</dbReference>
<dbReference type="ExpressionAtlas" id="Q9LIF8">
    <property type="expression patterns" value="baseline and differential"/>
</dbReference>
<dbReference type="GO" id="GO:0030246">
    <property type="term" value="F:carbohydrate binding"/>
    <property type="evidence" value="ECO:0007669"/>
    <property type="project" value="UniProtKB-KW"/>
</dbReference>
<dbReference type="CDD" id="cd09612">
    <property type="entry name" value="Jacalin"/>
    <property type="match status" value="3"/>
</dbReference>
<dbReference type="FunFam" id="2.100.10.30:FF:000001">
    <property type="entry name" value="Jacalin-related lectin 33"/>
    <property type="match status" value="2"/>
</dbReference>
<dbReference type="Gene3D" id="2.100.10.30">
    <property type="entry name" value="Jacalin-like lectin domain"/>
    <property type="match status" value="3"/>
</dbReference>
<dbReference type="InterPro" id="IPR001229">
    <property type="entry name" value="Jacalin-like_lectin_dom"/>
</dbReference>
<dbReference type="InterPro" id="IPR033734">
    <property type="entry name" value="Jacalin-like_lectin_dom_plant"/>
</dbReference>
<dbReference type="InterPro" id="IPR036404">
    <property type="entry name" value="Jacalin-like_lectin_dom_sf"/>
</dbReference>
<dbReference type="PANTHER" id="PTHR47293:SF66">
    <property type="entry name" value="JACALIN-RELATED LECTIN 11-RELATED"/>
    <property type="match status" value="1"/>
</dbReference>
<dbReference type="PANTHER" id="PTHR47293">
    <property type="entry name" value="JACALIN-RELATED LECTIN 3"/>
    <property type="match status" value="1"/>
</dbReference>
<dbReference type="Pfam" id="PF01419">
    <property type="entry name" value="Jacalin"/>
    <property type="match status" value="3"/>
</dbReference>
<dbReference type="SMART" id="SM00915">
    <property type="entry name" value="Jacalin"/>
    <property type="match status" value="3"/>
</dbReference>
<dbReference type="SUPFAM" id="SSF51101">
    <property type="entry name" value="Mannose-binding lectins"/>
    <property type="match status" value="3"/>
</dbReference>
<dbReference type="PROSITE" id="PS51752">
    <property type="entry name" value="JACALIN_LECTIN"/>
    <property type="match status" value="3"/>
</dbReference>
<accession>Q9LIF8</accession>
<accession>Q6NQJ9</accession>